<feature type="chain" id="PRO_0000390028" description="NADH-quinone oxidoreductase subunit K">
    <location>
        <begin position="1"/>
        <end position="103"/>
    </location>
</feature>
<feature type="transmembrane region" description="Helical" evidence="1">
    <location>
        <begin position="5"/>
        <end position="25"/>
    </location>
</feature>
<feature type="transmembrane region" description="Helical" evidence="1">
    <location>
        <begin position="32"/>
        <end position="52"/>
    </location>
</feature>
<feature type="transmembrane region" description="Helical" evidence="1">
    <location>
        <begin position="66"/>
        <end position="86"/>
    </location>
</feature>
<accession>Q9RU97</accession>
<sequence>MPEMVPTSYYLALSGVLFALGLIGVMTRRTAILIFLSVELMLNAANIALVAFARSWGDLMGQTAVFIVMTLAAAEVAIGLAIIVAIFRGRETTNVDDLAQLRG</sequence>
<evidence type="ECO:0000255" key="1">
    <source>
        <dbReference type="HAMAP-Rule" id="MF_01456"/>
    </source>
</evidence>
<comment type="function">
    <text evidence="1">NDH-1 shuttles electrons from NADH, via FMN and iron-sulfur (Fe-S) centers, to quinones in the respiratory chain. The immediate electron acceptor for the enzyme in this species is believed to be a menaquinone. Couples the redox reaction to proton translocation (for every two electrons transferred, four hydrogen ions are translocated across the cytoplasmic membrane), and thus conserves the redox energy in a proton gradient.</text>
</comment>
<comment type="catalytic activity">
    <reaction evidence="1">
        <text>a quinone + NADH + 5 H(+)(in) = a quinol + NAD(+) + 4 H(+)(out)</text>
        <dbReference type="Rhea" id="RHEA:57888"/>
        <dbReference type="ChEBI" id="CHEBI:15378"/>
        <dbReference type="ChEBI" id="CHEBI:24646"/>
        <dbReference type="ChEBI" id="CHEBI:57540"/>
        <dbReference type="ChEBI" id="CHEBI:57945"/>
        <dbReference type="ChEBI" id="CHEBI:132124"/>
    </reaction>
</comment>
<comment type="subunit">
    <text evidence="1">NDH-1 is composed of 15 different subunits. Subunits NuoA, H, J, K, L, M, N constitute the membrane sector of the complex.</text>
</comment>
<comment type="subcellular location">
    <subcellularLocation>
        <location evidence="1">Cell membrane</location>
        <topology evidence="1">Multi-pass membrane protein</topology>
    </subcellularLocation>
</comment>
<comment type="similarity">
    <text evidence="1">Belongs to the complex I subunit 4L family.</text>
</comment>
<organism>
    <name type="scientific">Deinococcus radiodurans (strain ATCC 13939 / DSM 20539 / JCM 16871 / CCUG 27074 / LMG 4051 / NBRC 15346 / NCIMB 9279 / VKM B-1422 / R1)</name>
    <dbReference type="NCBI Taxonomy" id="243230"/>
    <lineage>
        <taxon>Bacteria</taxon>
        <taxon>Thermotogati</taxon>
        <taxon>Deinococcota</taxon>
        <taxon>Deinococci</taxon>
        <taxon>Deinococcales</taxon>
        <taxon>Deinococcaceae</taxon>
        <taxon>Deinococcus</taxon>
    </lineage>
</organism>
<proteinExistence type="inferred from homology"/>
<name>NUOK_DEIRA</name>
<protein>
    <recommendedName>
        <fullName evidence="1">NADH-quinone oxidoreductase subunit K</fullName>
        <ecNumber evidence="1">7.1.1.-</ecNumber>
    </recommendedName>
    <alternativeName>
        <fullName evidence="1">NADH dehydrogenase I subunit K</fullName>
    </alternativeName>
    <alternativeName>
        <fullName evidence="1">NDH-1 subunit K</fullName>
    </alternativeName>
</protein>
<keyword id="KW-1003">Cell membrane</keyword>
<keyword id="KW-0472">Membrane</keyword>
<keyword id="KW-0520">NAD</keyword>
<keyword id="KW-0874">Quinone</keyword>
<keyword id="KW-1185">Reference proteome</keyword>
<keyword id="KW-1278">Translocase</keyword>
<keyword id="KW-0812">Transmembrane</keyword>
<keyword id="KW-1133">Transmembrane helix</keyword>
<keyword id="KW-0813">Transport</keyword>
<reference key="1">
    <citation type="journal article" date="1999" name="Science">
        <title>Genome sequence of the radioresistant bacterium Deinococcus radiodurans R1.</title>
        <authorList>
            <person name="White O."/>
            <person name="Eisen J.A."/>
            <person name="Heidelberg J.F."/>
            <person name="Hickey E.K."/>
            <person name="Peterson J.D."/>
            <person name="Dodson R.J."/>
            <person name="Haft D.H."/>
            <person name="Gwinn M.L."/>
            <person name="Nelson W.C."/>
            <person name="Richardson D.L."/>
            <person name="Moffat K.S."/>
            <person name="Qin H."/>
            <person name="Jiang L."/>
            <person name="Pamphile W."/>
            <person name="Crosby M."/>
            <person name="Shen M."/>
            <person name="Vamathevan J.J."/>
            <person name="Lam P."/>
            <person name="McDonald L.A."/>
            <person name="Utterback T.R."/>
            <person name="Zalewski C."/>
            <person name="Makarova K.S."/>
            <person name="Aravind L."/>
            <person name="Daly M.J."/>
            <person name="Minton K.W."/>
            <person name="Fleischmann R.D."/>
            <person name="Ketchum K.A."/>
            <person name="Nelson K.E."/>
            <person name="Salzberg S.L."/>
            <person name="Smith H.O."/>
            <person name="Venter J.C."/>
            <person name="Fraser C.M."/>
        </authorList>
    </citation>
    <scope>NUCLEOTIDE SEQUENCE [LARGE SCALE GENOMIC DNA]</scope>
    <source>
        <strain>ATCC 13939 / DSM 20539 / JCM 16871 / CCUG 27074 / LMG 4051 / NBRC 15346 / NCIMB 9279 / VKM B-1422 / R1</strain>
    </source>
</reference>
<gene>
    <name evidence="1" type="primary">nuoK</name>
    <name type="ordered locus">DR_1495</name>
</gene>
<dbReference type="EC" id="7.1.1.-" evidence="1"/>
<dbReference type="EMBL" id="AE000513">
    <property type="protein sequence ID" value="AAF11058.1"/>
    <property type="molecule type" value="Genomic_DNA"/>
</dbReference>
<dbReference type="PIR" id="B75390">
    <property type="entry name" value="B75390"/>
</dbReference>
<dbReference type="RefSeq" id="NP_295218.1">
    <property type="nucleotide sequence ID" value="NC_001263.1"/>
</dbReference>
<dbReference type="SMR" id="Q9RU97"/>
<dbReference type="STRING" id="243230.DR_1495"/>
<dbReference type="PaxDb" id="243230-DR_1495"/>
<dbReference type="EnsemblBacteria" id="AAF11058">
    <property type="protein sequence ID" value="AAF11058"/>
    <property type="gene ID" value="DR_1495"/>
</dbReference>
<dbReference type="KEGG" id="dra:DR_1495"/>
<dbReference type="PATRIC" id="fig|243230.17.peg.1697"/>
<dbReference type="eggNOG" id="COG0713">
    <property type="taxonomic scope" value="Bacteria"/>
</dbReference>
<dbReference type="HOGENOM" id="CLU_144724_0_0_0"/>
<dbReference type="InParanoid" id="Q9RU97"/>
<dbReference type="OrthoDB" id="9810120at2"/>
<dbReference type="Proteomes" id="UP000002524">
    <property type="component" value="Chromosome 1"/>
</dbReference>
<dbReference type="GO" id="GO:0030964">
    <property type="term" value="C:NADH dehydrogenase complex"/>
    <property type="evidence" value="ECO:0000318"/>
    <property type="project" value="GO_Central"/>
</dbReference>
<dbReference type="GO" id="GO:0005886">
    <property type="term" value="C:plasma membrane"/>
    <property type="evidence" value="ECO:0007669"/>
    <property type="project" value="UniProtKB-SubCell"/>
</dbReference>
<dbReference type="GO" id="GO:0050136">
    <property type="term" value="F:NADH:ubiquinone reductase (non-electrogenic) activity"/>
    <property type="evidence" value="ECO:0007669"/>
    <property type="project" value="UniProtKB-UniRule"/>
</dbReference>
<dbReference type="GO" id="GO:0048038">
    <property type="term" value="F:quinone binding"/>
    <property type="evidence" value="ECO:0007669"/>
    <property type="project" value="UniProtKB-KW"/>
</dbReference>
<dbReference type="GO" id="GO:0042773">
    <property type="term" value="P:ATP synthesis coupled electron transport"/>
    <property type="evidence" value="ECO:0007669"/>
    <property type="project" value="InterPro"/>
</dbReference>
<dbReference type="FunFam" id="1.10.287.3510:FF:000001">
    <property type="entry name" value="NADH-quinone oxidoreductase subunit K"/>
    <property type="match status" value="1"/>
</dbReference>
<dbReference type="Gene3D" id="1.10.287.3510">
    <property type="match status" value="1"/>
</dbReference>
<dbReference type="HAMAP" id="MF_01456">
    <property type="entry name" value="NDH1_NuoK"/>
    <property type="match status" value="1"/>
</dbReference>
<dbReference type="InterPro" id="IPR001133">
    <property type="entry name" value="NADH_UbQ_OxRdtase_chain4L/K"/>
</dbReference>
<dbReference type="InterPro" id="IPR039428">
    <property type="entry name" value="NUOK/Mnh_C1-like"/>
</dbReference>
<dbReference type="NCBIfam" id="NF004320">
    <property type="entry name" value="PRK05715.1-2"/>
    <property type="match status" value="1"/>
</dbReference>
<dbReference type="NCBIfam" id="NF004321">
    <property type="entry name" value="PRK05715.1-3"/>
    <property type="match status" value="1"/>
</dbReference>
<dbReference type="NCBIfam" id="NF004323">
    <property type="entry name" value="PRK05715.1-5"/>
    <property type="match status" value="1"/>
</dbReference>
<dbReference type="PANTHER" id="PTHR11434:SF21">
    <property type="entry name" value="NADH DEHYDROGENASE SUBUNIT 4L-RELATED"/>
    <property type="match status" value="1"/>
</dbReference>
<dbReference type="PANTHER" id="PTHR11434">
    <property type="entry name" value="NADH-UBIQUINONE OXIDOREDUCTASE SUBUNIT ND4L"/>
    <property type="match status" value="1"/>
</dbReference>
<dbReference type="Pfam" id="PF00420">
    <property type="entry name" value="Oxidored_q2"/>
    <property type="match status" value="1"/>
</dbReference>